<feature type="signal peptide" evidence="1">
    <location>
        <begin position="1"/>
        <end position="24"/>
    </location>
</feature>
<feature type="chain" id="PRO_0000018917" description="Patr class I histocompatibility antigen, B-2 alpha chain">
    <location>
        <begin position="25"/>
        <end position="362"/>
    </location>
</feature>
<feature type="topological domain" description="Extracellular" evidence="2">
    <location>
        <begin position="25"/>
        <end position="308"/>
    </location>
</feature>
<feature type="transmembrane region" description="Helical" evidence="2">
    <location>
        <begin position="309"/>
        <end position="332"/>
    </location>
</feature>
<feature type="topological domain" description="Cytoplasmic" evidence="2">
    <location>
        <begin position="333"/>
        <end position="362"/>
    </location>
</feature>
<feature type="domain" description="Ig-like C1-type">
    <location>
        <begin position="209"/>
        <end position="295"/>
    </location>
</feature>
<feature type="region of interest" description="Alpha-1">
    <location>
        <begin position="25"/>
        <end position="114"/>
    </location>
</feature>
<feature type="region of interest" description="Alpha-2">
    <location>
        <begin position="115"/>
        <end position="206"/>
    </location>
</feature>
<feature type="region of interest" description="Alpha-3">
    <location>
        <begin position="207"/>
        <end position="298"/>
    </location>
</feature>
<feature type="region of interest" description="Connecting peptide">
    <location>
        <begin position="299"/>
        <end position="308"/>
    </location>
</feature>
<feature type="region of interest" description="Disordered" evidence="4">
    <location>
        <begin position="336"/>
        <end position="362"/>
    </location>
</feature>
<feature type="compositionally biased region" description="Low complexity" evidence="4">
    <location>
        <begin position="343"/>
        <end position="362"/>
    </location>
</feature>
<feature type="glycosylation site" description="N-linked (GlcNAc...) asparagine" evidence="1">
    <location>
        <position position="110"/>
    </location>
</feature>
<feature type="disulfide bond" evidence="3">
    <location>
        <begin position="125"/>
        <end position="188"/>
    </location>
</feature>
<feature type="disulfide bond" evidence="3">
    <location>
        <begin position="227"/>
        <end position="283"/>
    </location>
</feature>
<reference key="1">
    <citation type="journal article" date="1988" name="EMBO J.">
        <title>Nucleotide sequences of chimpanzee MHC class I alleles: evidence for trans-species mode of evolution.</title>
        <authorList>
            <person name="Mayer W.E."/>
            <person name="Jonker M."/>
            <person name="Klein D."/>
            <person name="Ivanyi P."/>
            <person name="van Seventer G."/>
            <person name="Klein J."/>
        </authorList>
    </citation>
    <scope>NUCLEOTIDE SEQUENCE [MRNA]</scope>
</reference>
<reference key="2">
    <citation type="submission" date="1989-02" db="EMBL/GenBank/DDBJ databases">
        <authorList>
            <person name="Mayer W."/>
        </authorList>
    </citation>
    <scope>SEQUENCE REVISION</scope>
</reference>
<reference key="3">
    <citation type="journal article" date="2000" name="Immunogenetics">
        <title>Major histocompatibility complex class I diversity in a West African chimpanzee population: implications for HIV research.</title>
        <authorList>
            <person name="de Groot N.G."/>
            <person name="Otting N."/>
            <person name="Arguello R."/>
            <person name="Watkins D.I."/>
            <person name="Doxiadis G.G."/>
            <person name="Madrigal J.A."/>
            <person name="Bontrop R.E."/>
        </authorList>
    </citation>
    <scope>NUCLEOTIDE SEQUENCE [MRNA]</scope>
    <source>
        <tissue>Blood</tissue>
    </source>
</reference>
<accession>P13751</accession>
<accession>Q9MXK0</accession>
<evidence type="ECO:0000250" key="1"/>
<evidence type="ECO:0000255" key="2"/>
<evidence type="ECO:0000255" key="3">
    <source>
        <dbReference type="PROSITE-ProRule" id="PRU00114"/>
    </source>
</evidence>
<evidence type="ECO:0000256" key="4">
    <source>
        <dbReference type="SAM" id="MobiDB-lite"/>
    </source>
</evidence>
<evidence type="ECO:0000305" key="5"/>
<comment type="function">
    <text>Involved in the presentation of foreign antigens to the immune system.</text>
</comment>
<comment type="subunit">
    <text>Heterodimer of an alpha chain and a beta chain (beta-2-microglobulin).</text>
</comment>
<comment type="subcellular location">
    <subcellularLocation>
        <location>Membrane</location>
        <topology>Single-pass type I membrane protein</topology>
    </subcellularLocation>
</comment>
<comment type="similarity">
    <text evidence="5">Belongs to the MHC class I family.</text>
</comment>
<protein>
    <recommendedName>
        <fullName>Patr class I histocompatibility antigen, B-2 alpha chain</fullName>
    </recommendedName>
    <alternativeName>
        <fullName>ChLa class I histocompatibility antigen, B-2 alpha chain</fullName>
    </alternativeName>
</protein>
<keyword id="KW-1015">Disulfide bond</keyword>
<keyword id="KW-0325">Glycoprotein</keyword>
<keyword id="KW-0391">Immunity</keyword>
<keyword id="KW-0472">Membrane</keyword>
<keyword id="KW-0490">MHC I</keyword>
<keyword id="KW-1185">Reference proteome</keyword>
<keyword id="KW-0732">Signal</keyword>
<keyword id="KW-0812">Transmembrane</keyword>
<keyword id="KW-1133">Transmembrane helix</keyword>
<name>1B02_PANTR</name>
<sequence>MQVTAPRTVLLLLSAALALTETWAGSHSMKYFYTAVSRPGRGEPRFISVGYVDDTQFVWFDSDAASPREEPRAPWIEQEGPEYWDRETQISKTNAQTYRESLRNLRGYYNQSEAGSHIIQRMYGCDMGPDGRLLRGYEQYAYDGKDYIALNEDLSSWTAADTAAQITQRKWEAARWAEQLRAYLEGTCVEWLRRYLENGKETLQRADPPKTHVTHHPISDHEATLRCWALGFYPAEITLTWQRDGEDQTQDTELVETRPAGDRTFQKWAAVVVPSGEEQRYTCHVQHEGLPKPLTLRWEPSSQSTIPIVGIVAGLAVLAVVVIGAVVAAVMCRRKSSGGKGGSYSQAASSDSAQGSDVSLTA</sequence>
<proteinExistence type="evidence at transcript level"/>
<organism>
    <name type="scientific">Pan troglodytes</name>
    <name type="common">Chimpanzee</name>
    <dbReference type="NCBI Taxonomy" id="9598"/>
    <lineage>
        <taxon>Eukaryota</taxon>
        <taxon>Metazoa</taxon>
        <taxon>Chordata</taxon>
        <taxon>Craniata</taxon>
        <taxon>Vertebrata</taxon>
        <taxon>Euteleostomi</taxon>
        <taxon>Mammalia</taxon>
        <taxon>Eutheria</taxon>
        <taxon>Euarchontoglires</taxon>
        <taxon>Primates</taxon>
        <taxon>Haplorrhini</taxon>
        <taxon>Catarrhini</taxon>
        <taxon>Hominidae</taxon>
        <taxon>Pan</taxon>
    </lineage>
</organism>
<dbReference type="EMBL" id="X13116">
    <property type="protein sequence ID" value="CAA31508.1"/>
    <property type="molecule type" value="mRNA"/>
</dbReference>
<dbReference type="EMBL" id="AF168411">
    <property type="protein sequence ID" value="AAF72792.2"/>
    <property type="molecule type" value="mRNA"/>
</dbReference>
<dbReference type="PIR" id="S03538">
    <property type="entry name" value="S03538"/>
</dbReference>
<dbReference type="RefSeq" id="NP_001009081.1">
    <property type="nucleotide sequence ID" value="NM_001009081.1"/>
</dbReference>
<dbReference type="SMR" id="P13751"/>
<dbReference type="FunCoup" id="P13751">
    <property type="interactions" value="843"/>
</dbReference>
<dbReference type="GeneID" id="450202"/>
<dbReference type="CTD" id="450202"/>
<dbReference type="InParanoid" id="P13751"/>
<dbReference type="Proteomes" id="UP000002277">
    <property type="component" value="Unplaced"/>
</dbReference>
<dbReference type="GO" id="GO:0031901">
    <property type="term" value="C:early endosome membrane"/>
    <property type="evidence" value="ECO:0007669"/>
    <property type="project" value="UniProtKB-ARBA"/>
</dbReference>
<dbReference type="GO" id="GO:0012507">
    <property type="term" value="C:ER to Golgi transport vesicle membrane"/>
    <property type="evidence" value="ECO:0007669"/>
    <property type="project" value="UniProtKB-ARBA"/>
</dbReference>
<dbReference type="GO" id="GO:0009897">
    <property type="term" value="C:external side of plasma membrane"/>
    <property type="evidence" value="ECO:0000318"/>
    <property type="project" value="GO_Central"/>
</dbReference>
<dbReference type="GO" id="GO:0005615">
    <property type="term" value="C:extracellular space"/>
    <property type="evidence" value="ECO:0000318"/>
    <property type="project" value="GO_Central"/>
</dbReference>
<dbReference type="GO" id="GO:0098553">
    <property type="term" value="C:lumenal side of endoplasmic reticulum membrane"/>
    <property type="evidence" value="ECO:0007669"/>
    <property type="project" value="UniProtKB-ARBA"/>
</dbReference>
<dbReference type="GO" id="GO:0042612">
    <property type="term" value="C:MHC class I protein complex"/>
    <property type="evidence" value="ECO:0007669"/>
    <property type="project" value="UniProtKB-KW"/>
</dbReference>
<dbReference type="GO" id="GO:0030670">
    <property type="term" value="C:phagocytic vesicle membrane"/>
    <property type="evidence" value="ECO:0007669"/>
    <property type="project" value="UniProtKB-ARBA"/>
</dbReference>
<dbReference type="GO" id="GO:0055038">
    <property type="term" value="C:recycling endosome membrane"/>
    <property type="evidence" value="ECO:0007669"/>
    <property type="project" value="UniProtKB-ARBA"/>
</dbReference>
<dbReference type="GO" id="GO:0042605">
    <property type="term" value="F:peptide antigen binding"/>
    <property type="evidence" value="ECO:0000318"/>
    <property type="project" value="GO_Central"/>
</dbReference>
<dbReference type="GO" id="GO:0005102">
    <property type="term" value="F:signaling receptor binding"/>
    <property type="evidence" value="ECO:0000318"/>
    <property type="project" value="GO_Central"/>
</dbReference>
<dbReference type="GO" id="GO:0002486">
    <property type="term" value="P:antigen processing and presentation of endogenous peptide antigen via MHC class I via ER pathway, TAP-independent"/>
    <property type="evidence" value="ECO:0000318"/>
    <property type="project" value="GO_Central"/>
</dbReference>
<dbReference type="GO" id="GO:0002476">
    <property type="term" value="P:antigen processing and presentation of endogenous peptide antigen via MHC class Ib"/>
    <property type="evidence" value="ECO:0000318"/>
    <property type="project" value="GO_Central"/>
</dbReference>
<dbReference type="GO" id="GO:0006955">
    <property type="term" value="P:immune response"/>
    <property type="evidence" value="ECO:0000318"/>
    <property type="project" value="GO_Central"/>
</dbReference>
<dbReference type="GO" id="GO:0001916">
    <property type="term" value="P:positive regulation of T cell mediated cytotoxicity"/>
    <property type="evidence" value="ECO:0000318"/>
    <property type="project" value="GO_Central"/>
</dbReference>
<dbReference type="CDD" id="cd21026">
    <property type="entry name" value="IgC1_MHC_Ia_HLA-B"/>
    <property type="match status" value="1"/>
</dbReference>
<dbReference type="FunFam" id="2.60.40.10:FF:000014">
    <property type="entry name" value="H-2 class I histocompatibility antigen, alpha chain"/>
    <property type="match status" value="1"/>
</dbReference>
<dbReference type="FunFam" id="3.30.500.10:FF:000001">
    <property type="entry name" value="H-2 class I histocompatibility antigen, alpha chain"/>
    <property type="match status" value="1"/>
</dbReference>
<dbReference type="Gene3D" id="2.60.40.10">
    <property type="entry name" value="Immunoglobulins"/>
    <property type="match status" value="1"/>
</dbReference>
<dbReference type="Gene3D" id="3.30.500.10">
    <property type="entry name" value="MHC class I-like antigen recognition-like"/>
    <property type="match status" value="1"/>
</dbReference>
<dbReference type="InterPro" id="IPR007110">
    <property type="entry name" value="Ig-like_dom"/>
</dbReference>
<dbReference type="InterPro" id="IPR036179">
    <property type="entry name" value="Ig-like_dom_sf"/>
</dbReference>
<dbReference type="InterPro" id="IPR013783">
    <property type="entry name" value="Ig-like_fold"/>
</dbReference>
<dbReference type="InterPro" id="IPR003006">
    <property type="entry name" value="Ig/MHC_CS"/>
</dbReference>
<dbReference type="InterPro" id="IPR003597">
    <property type="entry name" value="Ig_C1-set"/>
</dbReference>
<dbReference type="InterPro" id="IPR050208">
    <property type="entry name" value="MHC_class-I_related"/>
</dbReference>
<dbReference type="InterPro" id="IPR011161">
    <property type="entry name" value="MHC_I-like_Ag-recog"/>
</dbReference>
<dbReference type="InterPro" id="IPR037055">
    <property type="entry name" value="MHC_I-like_Ag-recog_sf"/>
</dbReference>
<dbReference type="InterPro" id="IPR011162">
    <property type="entry name" value="MHC_I/II-like_Ag-recog"/>
</dbReference>
<dbReference type="InterPro" id="IPR001039">
    <property type="entry name" value="MHC_I_a_a1/a2"/>
</dbReference>
<dbReference type="InterPro" id="IPR010579">
    <property type="entry name" value="MHC_I_a_C"/>
</dbReference>
<dbReference type="PANTHER" id="PTHR16675:SF270">
    <property type="entry name" value="HLA CLASS I HISTOCOMPATIBILITY ANTIGEN, B ALPHA CHAIN"/>
    <property type="match status" value="1"/>
</dbReference>
<dbReference type="PANTHER" id="PTHR16675">
    <property type="entry name" value="MHC CLASS I-RELATED"/>
    <property type="match status" value="1"/>
</dbReference>
<dbReference type="Pfam" id="PF07654">
    <property type="entry name" value="C1-set"/>
    <property type="match status" value="1"/>
</dbReference>
<dbReference type="Pfam" id="PF00129">
    <property type="entry name" value="MHC_I"/>
    <property type="match status" value="1"/>
</dbReference>
<dbReference type="Pfam" id="PF06623">
    <property type="entry name" value="MHC_I_C"/>
    <property type="match status" value="1"/>
</dbReference>
<dbReference type="PRINTS" id="PR01638">
    <property type="entry name" value="MHCCLASSI"/>
</dbReference>
<dbReference type="SMART" id="SM00407">
    <property type="entry name" value="IGc1"/>
    <property type="match status" value="1"/>
</dbReference>
<dbReference type="SUPFAM" id="SSF48726">
    <property type="entry name" value="Immunoglobulin"/>
    <property type="match status" value="1"/>
</dbReference>
<dbReference type="SUPFAM" id="SSF54452">
    <property type="entry name" value="MHC antigen-recognition domain"/>
    <property type="match status" value="1"/>
</dbReference>
<dbReference type="PROSITE" id="PS50835">
    <property type="entry name" value="IG_LIKE"/>
    <property type="match status" value="1"/>
</dbReference>
<dbReference type="PROSITE" id="PS00290">
    <property type="entry name" value="IG_MHC"/>
    <property type="match status" value="1"/>
</dbReference>